<feature type="chain" id="PRO_1000079489" description="NAD kinase">
    <location>
        <begin position="1"/>
        <end position="288"/>
    </location>
</feature>
<feature type="active site" description="Proton acceptor" evidence="1">
    <location>
        <position position="68"/>
    </location>
</feature>
<feature type="binding site" evidence="1">
    <location>
        <begin position="68"/>
        <end position="69"/>
    </location>
    <ligand>
        <name>NAD(+)</name>
        <dbReference type="ChEBI" id="CHEBI:57540"/>
    </ligand>
</feature>
<feature type="binding site" evidence="1">
    <location>
        <begin position="142"/>
        <end position="143"/>
    </location>
    <ligand>
        <name>NAD(+)</name>
        <dbReference type="ChEBI" id="CHEBI:57540"/>
    </ligand>
</feature>
<feature type="binding site" evidence="1">
    <location>
        <position position="153"/>
    </location>
    <ligand>
        <name>NAD(+)</name>
        <dbReference type="ChEBI" id="CHEBI:57540"/>
    </ligand>
</feature>
<feature type="binding site" evidence="1">
    <location>
        <position position="172"/>
    </location>
    <ligand>
        <name>NAD(+)</name>
        <dbReference type="ChEBI" id="CHEBI:57540"/>
    </ligand>
</feature>
<feature type="binding site" evidence="1">
    <location>
        <position position="242"/>
    </location>
    <ligand>
        <name>NAD(+)</name>
        <dbReference type="ChEBI" id="CHEBI:57540"/>
    </ligand>
</feature>
<keyword id="KW-0067">ATP-binding</keyword>
<keyword id="KW-0963">Cytoplasm</keyword>
<keyword id="KW-0418">Kinase</keyword>
<keyword id="KW-0520">NAD</keyword>
<keyword id="KW-0521">NADP</keyword>
<keyword id="KW-0547">Nucleotide-binding</keyword>
<keyword id="KW-1185">Reference proteome</keyword>
<keyword id="KW-0808">Transferase</keyword>
<accession>A4J3G3</accession>
<reference key="1">
    <citation type="submission" date="2007-03" db="EMBL/GenBank/DDBJ databases">
        <title>Complete sequence of Desulfotomaculum reducens MI-1.</title>
        <authorList>
            <consortium name="US DOE Joint Genome Institute"/>
            <person name="Copeland A."/>
            <person name="Lucas S."/>
            <person name="Lapidus A."/>
            <person name="Barry K."/>
            <person name="Detter J.C."/>
            <person name="Glavina del Rio T."/>
            <person name="Hammon N."/>
            <person name="Israni S."/>
            <person name="Dalin E."/>
            <person name="Tice H."/>
            <person name="Pitluck S."/>
            <person name="Sims D."/>
            <person name="Brettin T."/>
            <person name="Bruce D."/>
            <person name="Han C."/>
            <person name="Tapia R."/>
            <person name="Schmutz J."/>
            <person name="Larimer F."/>
            <person name="Land M."/>
            <person name="Hauser L."/>
            <person name="Kyrpides N."/>
            <person name="Kim E."/>
            <person name="Tebo B.M."/>
            <person name="Richardson P."/>
        </authorList>
    </citation>
    <scope>NUCLEOTIDE SEQUENCE [LARGE SCALE GENOMIC DNA]</scope>
    <source>
        <strain>ATCC BAA-1160 / DSM 100696 / MI-1</strain>
    </source>
</reference>
<comment type="function">
    <text evidence="1">Involved in the regulation of the intracellular balance of NAD and NADP, and is a key enzyme in the biosynthesis of NADP. Catalyzes specifically the phosphorylation on 2'-hydroxyl of the adenosine moiety of NAD to yield NADP.</text>
</comment>
<comment type="catalytic activity">
    <reaction evidence="1">
        <text>NAD(+) + ATP = ADP + NADP(+) + H(+)</text>
        <dbReference type="Rhea" id="RHEA:18629"/>
        <dbReference type="ChEBI" id="CHEBI:15378"/>
        <dbReference type="ChEBI" id="CHEBI:30616"/>
        <dbReference type="ChEBI" id="CHEBI:57540"/>
        <dbReference type="ChEBI" id="CHEBI:58349"/>
        <dbReference type="ChEBI" id="CHEBI:456216"/>
        <dbReference type="EC" id="2.7.1.23"/>
    </reaction>
</comment>
<comment type="cofactor">
    <cofactor evidence="1">
        <name>a divalent metal cation</name>
        <dbReference type="ChEBI" id="CHEBI:60240"/>
    </cofactor>
</comment>
<comment type="subcellular location">
    <subcellularLocation>
        <location evidence="1">Cytoplasm</location>
    </subcellularLocation>
</comment>
<comment type="similarity">
    <text evidence="1">Belongs to the NAD kinase family.</text>
</comment>
<sequence length="288" mass="31301">MNTIGLVVNSSKGDVAKPVREVISWLAEQRIKVLYNEESAVLLGCPEEGISTRELGAQCDCIMVWGGDGTLLNCARQTASSGTPIFGVNLGRLGFLTEIDIPDLRERLQALIAGHFYIEERMMLEATVIRGGQVVDQAVCLNDAVVSKGASFRMVQLRILVNNEFVGSFAADGVIVASPTGSTAYSLAAGGPIISPDMEAMLITPICPHSLSNRPIVISPQSKVEVQVLPYVDKVGLNLDGQYGLPLREGDRILINRATVKARFLKIQKTGFYDVLREKLKEWQNGLD</sequence>
<name>NADK_DESRM</name>
<evidence type="ECO:0000255" key="1">
    <source>
        <dbReference type="HAMAP-Rule" id="MF_00361"/>
    </source>
</evidence>
<organism>
    <name type="scientific">Desulforamulus reducens (strain ATCC BAA-1160 / DSM 100696 / MI-1)</name>
    <name type="common">Desulfotomaculum reducens</name>
    <dbReference type="NCBI Taxonomy" id="349161"/>
    <lineage>
        <taxon>Bacteria</taxon>
        <taxon>Bacillati</taxon>
        <taxon>Bacillota</taxon>
        <taxon>Clostridia</taxon>
        <taxon>Eubacteriales</taxon>
        <taxon>Peptococcaceae</taxon>
        <taxon>Desulforamulus</taxon>
    </lineage>
</organism>
<proteinExistence type="inferred from homology"/>
<gene>
    <name evidence="1" type="primary">nadK</name>
    <name type="ordered locus">Dred_1081</name>
</gene>
<dbReference type="EC" id="2.7.1.23" evidence="1"/>
<dbReference type="EMBL" id="CP000612">
    <property type="protein sequence ID" value="ABO49616.1"/>
    <property type="molecule type" value="Genomic_DNA"/>
</dbReference>
<dbReference type="RefSeq" id="WP_011877442.1">
    <property type="nucleotide sequence ID" value="NC_009253.1"/>
</dbReference>
<dbReference type="SMR" id="A4J3G3"/>
<dbReference type="STRING" id="349161.Dred_1081"/>
<dbReference type="KEGG" id="drm:Dred_1081"/>
<dbReference type="eggNOG" id="COG0061">
    <property type="taxonomic scope" value="Bacteria"/>
</dbReference>
<dbReference type="HOGENOM" id="CLU_008831_0_1_9"/>
<dbReference type="OrthoDB" id="9774737at2"/>
<dbReference type="Proteomes" id="UP000001556">
    <property type="component" value="Chromosome"/>
</dbReference>
<dbReference type="GO" id="GO:0005737">
    <property type="term" value="C:cytoplasm"/>
    <property type="evidence" value="ECO:0007669"/>
    <property type="project" value="UniProtKB-SubCell"/>
</dbReference>
<dbReference type="GO" id="GO:0005524">
    <property type="term" value="F:ATP binding"/>
    <property type="evidence" value="ECO:0007669"/>
    <property type="project" value="UniProtKB-KW"/>
</dbReference>
<dbReference type="GO" id="GO:0046872">
    <property type="term" value="F:metal ion binding"/>
    <property type="evidence" value="ECO:0007669"/>
    <property type="project" value="UniProtKB-UniRule"/>
</dbReference>
<dbReference type="GO" id="GO:0051287">
    <property type="term" value="F:NAD binding"/>
    <property type="evidence" value="ECO:0007669"/>
    <property type="project" value="UniProtKB-ARBA"/>
</dbReference>
<dbReference type="GO" id="GO:0003951">
    <property type="term" value="F:NAD+ kinase activity"/>
    <property type="evidence" value="ECO:0007669"/>
    <property type="project" value="UniProtKB-UniRule"/>
</dbReference>
<dbReference type="GO" id="GO:0019674">
    <property type="term" value="P:NAD metabolic process"/>
    <property type="evidence" value="ECO:0007669"/>
    <property type="project" value="InterPro"/>
</dbReference>
<dbReference type="GO" id="GO:0006741">
    <property type="term" value="P:NADP biosynthetic process"/>
    <property type="evidence" value="ECO:0007669"/>
    <property type="project" value="UniProtKB-UniRule"/>
</dbReference>
<dbReference type="Gene3D" id="3.40.50.10330">
    <property type="entry name" value="Probable inorganic polyphosphate/atp-NAD kinase, domain 1"/>
    <property type="match status" value="1"/>
</dbReference>
<dbReference type="Gene3D" id="2.60.200.30">
    <property type="entry name" value="Probable inorganic polyphosphate/atp-NAD kinase, domain 2"/>
    <property type="match status" value="1"/>
</dbReference>
<dbReference type="HAMAP" id="MF_00361">
    <property type="entry name" value="NAD_kinase"/>
    <property type="match status" value="1"/>
</dbReference>
<dbReference type="InterPro" id="IPR017438">
    <property type="entry name" value="ATP-NAD_kinase_N"/>
</dbReference>
<dbReference type="InterPro" id="IPR017437">
    <property type="entry name" value="ATP-NAD_kinase_PpnK-typ_C"/>
</dbReference>
<dbReference type="InterPro" id="IPR016064">
    <property type="entry name" value="NAD/diacylglycerol_kinase_sf"/>
</dbReference>
<dbReference type="InterPro" id="IPR002504">
    <property type="entry name" value="NADK"/>
</dbReference>
<dbReference type="PANTHER" id="PTHR20275">
    <property type="entry name" value="NAD KINASE"/>
    <property type="match status" value="1"/>
</dbReference>
<dbReference type="PANTHER" id="PTHR20275:SF0">
    <property type="entry name" value="NAD KINASE"/>
    <property type="match status" value="1"/>
</dbReference>
<dbReference type="Pfam" id="PF01513">
    <property type="entry name" value="NAD_kinase"/>
    <property type="match status" value="1"/>
</dbReference>
<dbReference type="Pfam" id="PF20143">
    <property type="entry name" value="NAD_kinase_C"/>
    <property type="match status" value="1"/>
</dbReference>
<dbReference type="SUPFAM" id="SSF111331">
    <property type="entry name" value="NAD kinase/diacylglycerol kinase-like"/>
    <property type="match status" value="1"/>
</dbReference>
<protein>
    <recommendedName>
        <fullName evidence="1">NAD kinase</fullName>
        <ecNumber evidence="1">2.7.1.23</ecNumber>
    </recommendedName>
    <alternativeName>
        <fullName evidence="1">ATP-dependent NAD kinase</fullName>
    </alternativeName>
</protein>